<name>RL5_LACCB</name>
<organism>
    <name type="scientific">Lacticaseibacillus casei (strain BL23)</name>
    <name type="common">Lactobacillus casei</name>
    <dbReference type="NCBI Taxonomy" id="543734"/>
    <lineage>
        <taxon>Bacteria</taxon>
        <taxon>Bacillati</taxon>
        <taxon>Bacillota</taxon>
        <taxon>Bacilli</taxon>
        <taxon>Lactobacillales</taxon>
        <taxon>Lactobacillaceae</taxon>
        <taxon>Lacticaseibacillus</taxon>
    </lineage>
</organism>
<keyword id="KW-0687">Ribonucleoprotein</keyword>
<keyword id="KW-0689">Ribosomal protein</keyword>
<keyword id="KW-0694">RNA-binding</keyword>
<keyword id="KW-0699">rRNA-binding</keyword>
<keyword id="KW-0820">tRNA-binding</keyword>
<protein>
    <recommendedName>
        <fullName evidence="1">Large ribosomal subunit protein uL5</fullName>
    </recommendedName>
    <alternativeName>
        <fullName evidence="2">50S ribosomal protein L5</fullName>
    </alternativeName>
</protein>
<reference key="1">
    <citation type="submission" date="2008-06" db="EMBL/GenBank/DDBJ databases">
        <title>Lactobacillus casei BL23 complete genome sequence.</title>
        <authorList>
            <person name="Maze A."/>
            <person name="Boel G."/>
            <person name="Bourand A."/>
            <person name="Loux V."/>
            <person name="Gibrat J.F."/>
            <person name="Zuniga M."/>
            <person name="Hartke A."/>
            <person name="Deutscher J."/>
        </authorList>
    </citation>
    <scope>NUCLEOTIDE SEQUENCE [LARGE SCALE GENOMIC DNA]</scope>
    <source>
        <strain>BL23</strain>
    </source>
</reference>
<accession>B3WAK5</accession>
<sequence>MENRLEERYSKEIAPALVSKFNYKSTMQAPKIEKIVLNMGVGDATQNAKLLDEAVDELTLISGQHPLITKAKKSIAGFRLREGMPIGAKVTLRGERMYDFLDKLINVSLPRVRDFHGISPKSFDGRGNYTLGVKEQLIFPEIDYDKVNRVRGLDVVIVTTANTDEEALELLTQVGMPFAK</sequence>
<evidence type="ECO:0000255" key="1">
    <source>
        <dbReference type="HAMAP-Rule" id="MF_01333"/>
    </source>
</evidence>
<evidence type="ECO:0000305" key="2"/>
<gene>
    <name evidence="1" type="primary">rplE</name>
    <name type="ordered locus">LCABL_26580</name>
</gene>
<dbReference type="EMBL" id="FM177140">
    <property type="protein sequence ID" value="CAQ67724.1"/>
    <property type="molecule type" value="Genomic_DNA"/>
</dbReference>
<dbReference type="SMR" id="B3WAK5"/>
<dbReference type="KEGG" id="lcb:LCABL_26580"/>
<dbReference type="HOGENOM" id="CLU_061015_2_1_9"/>
<dbReference type="GO" id="GO:1990904">
    <property type="term" value="C:ribonucleoprotein complex"/>
    <property type="evidence" value="ECO:0007669"/>
    <property type="project" value="UniProtKB-KW"/>
</dbReference>
<dbReference type="GO" id="GO:0005840">
    <property type="term" value="C:ribosome"/>
    <property type="evidence" value="ECO:0007669"/>
    <property type="project" value="UniProtKB-KW"/>
</dbReference>
<dbReference type="GO" id="GO:0019843">
    <property type="term" value="F:rRNA binding"/>
    <property type="evidence" value="ECO:0007669"/>
    <property type="project" value="UniProtKB-UniRule"/>
</dbReference>
<dbReference type="GO" id="GO:0003735">
    <property type="term" value="F:structural constituent of ribosome"/>
    <property type="evidence" value="ECO:0007669"/>
    <property type="project" value="InterPro"/>
</dbReference>
<dbReference type="GO" id="GO:0000049">
    <property type="term" value="F:tRNA binding"/>
    <property type="evidence" value="ECO:0007669"/>
    <property type="project" value="UniProtKB-UniRule"/>
</dbReference>
<dbReference type="GO" id="GO:0006412">
    <property type="term" value="P:translation"/>
    <property type="evidence" value="ECO:0007669"/>
    <property type="project" value="UniProtKB-UniRule"/>
</dbReference>
<dbReference type="FunFam" id="3.30.1440.10:FF:000001">
    <property type="entry name" value="50S ribosomal protein L5"/>
    <property type="match status" value="1"/>
</dbReference>
<dbReference type="Gene3D" id="3.30.1440.10">
    <property type="match status" value="1"/>
</dbReference>
<dbReference type="HAMAP" id="MF_01333_B">
    <property type="entry name" value="Ribosomal_uL5_B"/>
    <property type="match status" value="1"/>
</dbReference>
<dbReference type="InterPro" id="IPR002132">
    <property type="entry name" value="Ribosomal_uL5"/>
</dbReference>
<dbReference type="InterPro" id="IPR020930">
    <property type="entry name" value="Ribosomal_uL5_bac-type"/>
</dbReference>
<dbReference type="InterPro" id="IPR031309">
    <property type="entry name" value="Ribosomal_uL5_C"/>
</dbReference>
<dbReference type="InterPro" id="IPR020929">
    <property type="entry name" value="Ribosomal_uL5_CS"/>
</dbReference>
<dbReference type="InterPro" id="IPR022803">
    <property type="entry name" value="Ribosomal_uL5_dom_sf"/>
</dbReference>
<dbReference type="InterPro" id="IPR031310">
    <property type="entry name" value="Ribosomal_uL5_N"/>
</dbReference>
<dbReference type="NCBIfam" id="NF000585">
    <property type="entry name" value="PRK00010.1"/>
    <property type="match status" value="1"/>
</dbReference>
<dbReference type="PANTHER" id="PTHR11994">
    <property type="entry name" value="60S RIBOSOMAL PROTEIN L11-RELATED"/>
    <property type="match status" value="1"/>
</dbReference>
<dbReference type="Pfam" id="PF00281">
    <property type="entry name" value="Ribosomal_L5"/>
    <property type="match status" value="1"/>
</dbReference>
<dbReference type="Pfam" id="PF00673">
    <property type="entry name" value="Ribosomal_L5_C"/>
    <property type="match status" value="1"/>
</dbReference>
<dbReference type="PIRSF" id="PIRSF002161">
    <property type="entry name" value="Ribosomal_L5"/>
    <property type="match status" value="1"/>
</dbReference>
<dbReference type="SUPFAM" id="SSF55282">
    <property type="entry name" value="RL5-like"/>
    <property type="match status" value="1"/>
</dbReference>
<dbReference type="PROSITE" id="PS00358">
    <property type="entry name" value="RIBOSOMAL_L5"/>
    <property type="match status" value="1"/>
</dbReference>
<comment type="function">
    <text evidence="1">This is one of the proteins that bind and probably mediate the attachment of the 5S RNA into the large ribosomal subunit, where it forms part of the central protuberance. In the 70S ribosome it contacts protein S13 of the 30S subunit (bridge B1b), connecting the 2 subunits; this bridge is implicated in subunit movement. Contacts the P site tRNA; the 5S rRNA and some of its associated proteins might help stabilize positioning of ribosome-bound tRNAs.</text>
</comment>
<comment type="subunit">
    <text evidence="1">Part of the 50S ribosomal subunit; part of the 5S rRNA/L5/L18/L25 subcomplex. Contacts the 5S rRNA and the P site tRNA. Forms a bridge to the 30S subunit in the 70S ribosome.</text>
</comment>
<comment type="similarity">
    <text evidence="1">Belongs to the universal ribosomal protein uL5 family.</text>
</comment>
<proteinExistence type="inferred from homology"/>
<feature type="chain" id="PRO_1000142415" description="Large ribosomal subunit protein uL5">
    <location>
        <begin position="1"/>
        <end position="180"/>
    </location>
</feature>